<reference key="1">
    <citation type="submission" date="2005-09" db="EMBL/GenBank/DDBJ databases">
        <title>Annotation of the Aspergillus terreus NIH2624 genome.</title>
        <authorList>
            <person name="Birren B.W."/>
            <person name="Lander E.S."/>
            <person name="Galagan J.E."/>
            <person name="Nusbaum C."/>
            <person name="Devon K."/>
            <person name="Henn M."/>
            <person name="Ma L.-J."/>
            <person name="Jaffe D.B."/>
            <person name="Butler J."/>
            <person name="Alvarez P."/>
            <person name="Gnerre S."/>
            <person name="Grabherr M."/>
            <person name="Kleber M."/>
            <person name="Mauceli E.W."/>
            <person name="Brockman W."/>
            <person name="Rounsley S."/>
            <person name="Young S.K."/>
            <person name="LaButti K."/>
            <person name="Pushparaj V."/>
            <person name="DeCaprio D."/>
            <person name="Crawford M."/>
            <person name="Koehrsen M."/>
            <person name="Engels R."/>
            <person name="Montgomery P."/>
            <person name="Pearson M."/>
            <person name="Howarth C."/>
            <person name="Larson L."/>
            <person name="Luoma S."/>
            <person name="White J."/>
            <person name="Alvarado L."/>
            <person name="Kodira C.D."/>
            <person name="Zeng Q."/>
            <person name="Oleary S."/>
            <person name="Yandava C."/>
            <person name="Denning D.W."/>
            <person name="Nierman W.C."/>
            <person name="Milne T."/>
            <person name="Madden K."/>
        </authorList>
    </citation>
    <scope>NUCLEOTIDE SEQUENCE [LARGE SCALE GENOMIC DNA]</scope>
    <source>
        <strain>NIH 2624 / FGSC A1156</strain>
    </source>
</reference>
<reference key="2">
    <citation type="journal article" date="2014" name="Chem. Biol.">
        <title>Aryl-aldehyde formation in fungal polyketides: discovery and characterization of a distinct biosynthetic mechanism.</title>
        <authorList>
            <person name="Wang M."/>
            <person name="Beissner M."/>
            <person name="Zhao H."/>
        </authorList>
    </citation>
    <scope>FUNCTION</scope>
</reference>
<reference key="3">
    <citation type="journal article" date="2013" name="J. Am. Chem. Soc.">
        <title>An efficient system for heterologous expression of secondary metabolite genes in Aspergillus nidulans.</title>
        <authorList>
            <person name="Chiang Y.M."/>
            <person name="Oakley C.E."/>
            <person name="Ahuja M."/>
            <person name="Entwistle R."/>
            <person name="Schultz A."/>
            <person name="Chang S.L."/>
            <person name="Sung C.T."/>
            <person name="Wang C.C."/>
            <person name="Oakley B.R."/>
        </authorList>
    </citation>
    <scope>FUNCTION</scope>
</reference>
<reference key="4">
    <citation type="journal article" date="2020" name="Angew. Chem. Int. Ed.">
        <title>Collaborative biosynthesis of a class of bioactive azaphilones by two separate gene clusters containing four PKS/NRPSs with transcriptional cosstalk in fungi.</title>
        <authorList>
            <person name="Huang X."/>
            <person name="Zhang W."/>
            <person name="Tang S."/>
            <person name="Wei S."/>
            <person name="Lu X."/>
        </authorList>
    </citation>
    <scope>FUNCTION</scope>
    <scope>INDUCTION</scope>
    <scope>DISRUPTION PHENOTYPE</scope>
    <scope>CATALYTIC ACTIVITY</scope>
    <scope>PATHWAY</scope>
    <scope>BIOTECHNOLOGY</scope>
</reference>
<comment type="function">
    <text evidence="4 5 8">Cytochrome P450 monooxygenase; part of the cluster A that mediates the biosynthesis of azasperpyranones, members of the azaphilone family that exhibit anti-cancer activities (PubMed:31908094). Azasperpyranones are synthesized by 2 clusters, A and B (PubMed:31908094). Cluster A is responsible for the production of the polyhydric phenol moiety while the azaphilonoid scaffold is produced by the cluster B (PubMed:31908094). The non-reducing polyketide synthase ATEG_03629 produces 5-methyl orsellinic acid, which is then reduced to 5-methyl orsellinic aldehyde by the NRPS-like protein ATEG_03630 (PubMed:24412543). 5-methyl orsellinic aldehyde is then first hydroxylated by the FAD-dependent monooxygenase ATEG_03635 and subsequently hydroxylated by the cytochrome P450 monooxygenase ATEG_03631 to produce the unstable polyhydric phenol precursor of azasperpyranones (PubMed:31908094). On the other hand, the polyketide synthase ATEG_07659 is responsible for producing the 3,5-dimethyloctadienone moiety from acetyl-CoA, three malonyl-CoA, and two S-adenosyl methionines (SAM) (Probable). The 3,5-dimethyloctadienone moiety is then loaded onto the SAT domain of ATEG_07661 and extended with four malonyl-CoA and one SAM, which leads to the formation of 2,4-dihydroxy-6-(5,7-dimethyl-2-oxo-trans-3-trans-5-nonadienyl)-3-methylbenzaldehyde (compound 8) after reductive release and aldol condensation (Probable). The FAD-dependent monooxygenase ATEG_07662 is the next enzyme in the biosynthesis sequence and hydroxylates the side chain at the benzylic position of compound 8 (Probable). In Aspergillus nidulans, afoF, the ortholog of the FAD-dependent oxygenase ATEG_07660, is the key enzyme for the biosynthesis of asperfuranone by catalyzing the hydroxylation at C-8 of to prevent the formation of a six-membered ring hemiacetal intermediate and thus facilitating the formation of a five-membered ring to produce asperfuranone (Probable). In Aspergillus terreus, ATEG_07660 is probably not functional, which leads to the formation of the six-membered ring hemiacetal intermediate presperpyranone instead of asperfuranone (Probable). Finally, ATEG_03636 is involved in the condensation of the polyhydric phenol moiety produced by cluster A and the perasperpyranone precursor produced by cluster B, to yield azasperpyranone A (Probable). Further modifications of azasperpyranone A result in the production of derivatives, including azasperpyranone B to F (PubMed:31908094).</text>
</comment>
<comment type="cofactor">
    <cofactor evidence="1">
        <name>heme</name>
        <dbReference type="ChEBI" id="CHEBI:30413"/>
    </cofactor>
</comment>
<comment type="pathway">
    <text evidence="5">Secondary metabolite biosynthesis.</text>
</comment>
<comment type="subcellular location">
    <subcellularLocation>
        <location evidence="2">Membrane</location>
        <topology evidence="2">Single-pass membrane protein</topology>
    </subcellularLocation>
</comment>
<comment type="induction">
    <text evidence="5">Expression is induced by the azasperpyranone cluster A-specific transcription factor ATEG_03638 which is itself regulated by the azasperpyranone transcriptional regulator ATEG_07667.</text>
</comment>
<comment type="disruption phenotype">
    <text evidence="5">Abolishes the production of azasperpyranone A.</text>
</comment>
<comment type="biotechnology">
    <text evidence="5">Azasperpyranones display potential anti-cancer activities (PubMed:31908094). Azasperpyranones A, C, D, and F exhibit potent growth-inhibitory activity against the A549, HepG2, HCT-116, and HL-60 cell lines, with IC(50) values of 2.39-14.42 mm, respectively (PubMed:31908094). Moreover, azasperpyranone D significantly inhibits HCT-116 xenograft tumor growth in BALB/c-nu mice (PubMed:31908094). In addition, azasperpyranones A and C can bind with four kinds of therapeutic targets for cancer, eEF2K, FGFR, survivin, and TNF-a (PubMed:31908094).</text>
</comment>
<comment type="similarity">
    <text evidence="7">Belongs to the cytochrome P450 family.</text>
</comment>
<comment type="sequence caution" evidence="7">
    <conflict type="erroneous gene model prediction">
        <sequence resource="EMBL-CDS" id="EAU35433"/>
    </conflict>
</comment>
<evidence type="ECO:0000250" key="1">
    <source>
        <dbReference type="UniProtKB" id="P04798"/>
    </source>
</evidence>
<evidence type="ECO:0000255" key="2"/>
<evidence type="ECO:0000255" key="3">
    <source>
        <dbReference type="PROSITE-ProRule" id="PRU00498"/>
    </source>
</evidence>
<evidence type="ECO:0000269" key="4">
    <source>
    </source>
</evidence>
<evidence type="ECO:0000269" key="5">
    <source>
    </source>
</evidence>
<evidence type="ECO:0000303" key="6">
    <source>
    </source>
</evidence>
<evidence type="ECO:0000305" key="7"/>
<evidence type="ECO:0000305" key="8">
    <source>
    </source>
</evidence>
<keyword id="KW-0325">Glycoprotein</keyword>
<keyword id="KW-0349">Heme</keyword>
<keyword id="KW-0408">Iron</keyword>
<keyword id="KW-0472">Membrane</keyword>
<keyword id="KW-0479">Metal-binding</keyword>
<keyword id="KW-0503">Monooxygenase</keyword>
<keyword id="KW-0560">Oxidoreductase</keyword>
<keyword id="KW-1185">Reference proteome</keyword>
<keyword id="KW-0812">Transmembrane</keyword>
<keyword id="KW-1133">Transmembrane helix</keyword>
<organism>
    <name type="scientific">Aspergillus terreus (strain NIH 2624 / FGSC A1156)</name>
    <dbReference type="NCBI Taxonomy" id="341663"/>
    <lineage>
        <taxon>Eukaryota</taxon>
        <taxon>Fungi</taxon>
        <taxon>Dikarya</taxon>
        <taxon>Ascomycota</taxon>
        <taxon>Pezizomycotina</taxon>
        <taxon>Eurotiomycetes</taxon>
        <taxon>Eurotiomycetidae</taxon>
        <taxon>Eurotiales</taxon>
        <taxon>Aspergillaceae</taxon>
        <taxon>Aspergillus</taxon>
        <taxon>Aspergillus subgen. Circumdati</taxon>
    </lineage>
</organism>
<dbReference type="EC" id="1.-.-.-" evidence="5"/>
<dbReference type="EMBL" id="CH476598">
    <property type="protein sequence ID" value="EAU35433.1"/>
    <property type="status" value="ALT_SEQ"/>
    <property type="molecule type" value="Genomic_DNA"/>
</dbReference>
<dbReference type="RefSeq" id="XP_001212809.1">
    <property type="nucleotide sequence ID" value="XM_001212809.1"/>
</dbReference>
<dbReference type="SMR" id="Q0CRQ3"/>
<dbReference type="STRING" id="341663.Q0CRQ3"/>
<dbReference type="EnsemblFungi" id="EAU35433">
    <property type="protein sequence ID" value="EAU35433"/>
    <property type="gene ID" value="ATEG_03631"/>
</dbReference>
<dbReference type="GeneID" id="4318787"/>
<dbReference type="eggNOG" id="KOG0156">
    <property type="taxonomic scope" value="Eukaryota"/>
</dbReference>
<dbReference type="HOGENOM" id="CLU_001570_14_0_1"/>
<dbReference type="OrthoDB" id="3934656at2759"/>
<dbReference type="Proteomes" id="UP000007963">
    <property type="component" value="Unassembled WGS sequence"/>
</dbReference>
<dbReference type="GO" id="GO:0016020">
    <property type="term" value="C:membrane"/>
    <property type="evidence" value="ECO:0007669"/>
    <property type="project" value="UniProtKB-SubCell"/>
</dbReference>
<dbReference type="GO" id="GO:0020037">
    <property type="term" value="F:heme binding"/>
    <property type="evidence" value="ECO:0007669"/>
    <property type="project" value="InterPro"/>
</dbReference>
<dbReference type="GO" id="GO:0005506">
    <property type="term" value="F:iron ion binding"/>
    <property type="evidence" value="ECO:0007669"/>
    <property type="project" value="InterPro"/>
</dbReference>
<dbReference type="GO" id="GO:0004497">
    <property type="term" value="F:monooxygenase activity"/>
    <property type="evidence" value="ECO:0007669"/>
    <property type="project" value="UniProtKB-KW"/>
</dbReference>
<dbReference type="GO" id="GO:0016705">
    <property type="term" value="F:oxidoreductase activity, acting on paired donors, with incorporation or reduction of molecular oxygen"/>
    <property type="evidence" value="ECO:0007669"/>
    <property type="project" value="InterPro"/>
</dbReference>
<dbReference type="GO" id="GO:0044550">
    <property type="term" value="P:secondary metabolite biosynthetic process"/>
    <property type="evidence" value="ECO:0007669"/>
    <property type="project" value="UniProtKB-ARBA"/>
</dbReference>
<dbReference type="CDD" id="cd11060">
    <property type="entry name" value="CYP57A1-like"/>
    <property type="match status" value="1"/>
</dbReference>
<dbReference type="FunFam" id="1.10.630.10:FF:000050">
    <property type="entry name" value="Cytochrome P450 monooxygenase"/>
    <property type="match status" value="1"/>
</dbReference>
<dbReference type="Gene3D" id="1.10.630.10">
    <property type="entry name" value="Cytochrome P450"/>
    <property type="match status" value="1"/>
</dbReference>
<dbReference type="InterPro" id="IPR001128">
    <property type="entry name" value="Cyt_P450"/>
</dbReference>
<dbReference type="InterPro" id="IPR017972">
    <property type="entry name" value="Cyt_P450_CS"/>
</dbReference>
<dbReference type="InterPro" id="IPR002401">
    <property type="entry name" value="Cyt_P450_E_grp-I"/>
</dbReference>
<dbReference type="InterPro" id="IPR036396">
    <property type="entry name" value="Cyt_P450_sf"/>
</dbReference>
<dbReference type="InterPro" id="IPR050121">
    <property type="entry name" value="Cytochrome_P450_monoxygenase"/>
</dbReference>
<dbReference type="PANTHER" id="PTHR24305">
    <property type="entry name" value="CYTOCHROME P450"/>
    <property type="match status" value="1"/>
</dbReference>
<dbReference type="PANTHER" id="PTHR24305:SF235">
    <property type="entry name" value="CYTOCHROME P450 MONOOXYGENASE APDB-RELATED"/>
    <property type="match status" value="1"/>
</dbReference>
<dbReference type="Pfam" id="PF00067">
    <property type="entry name" value="p450"/>
    <property type="match status" value="1"/>
</dbReference>
<dbReference type="PRINTS" id="PR00463">
    <property type="entry name" value="EP450I"/>
</dbReference>
<dbReference type="PRINTS" id="PR00385">
    <property type="entry name" value="P450"/>
</dbReference>
<dbReference type="SUPFAM" id="SSF48264">
    <property type="entry name" value="Cytochrome P450"/>
    <property type="match status" value="1"/>
</dbReference>
<dbReference type="PROSITE" id="PS00086">
    <property type="entry name" value="CYTOCHROME_P450"/>
    <property type="match status" value="1"/>
</dbReference>
<feature type="chain" id="PRO_0000450087" description="Cytochrome P450 monooxygenase ATEG_03631">
    <location>
        <begin position="1"/>
        <end position="492"/>
    </location>
</feature>
<feature type="transmembrane region" description="Helical" evidence="2">
    <location>
        <begin position="10"/>
        <end position="30"/>
    </location>
</feature>
<feature type="binding site" description="axial binding residue" evidence="1">
    <location>
        <position position="457"/>
    </location>
    <ligand>
        <name>heme</name>
        <dbReference type="ChEBI" id="CHEBI:30413"/>
    </ligand>
    <ligandPart>
        <name>Fe</name>
        <dbReference type="ChEBI" id="CHEBI:18248"/>
    </ligandPart>
</feature>
<feature type="glycosylation site" description="N-linked (GlcNAc...) asparagine" evidence="3">
    <location>
        <position position="309"/>
    </location>
</feature>
<name>AZPA3_ASPTN</name>
<gene>
    <name type="ORF">ATEG_03631</name>
</gene>
<sequence length="492" mass="56140">MALLEDIINFATLNPMVVVAIPVFLFVISLLRSYLRLAHIPGPFAAGWTNLPRFSWVLSFKAHDIHTALHRKYGPLVRFGPNMVSVGDPKEVGHIYGFTDPWMKSDFYHALLMKPRGKPIPGIFAAQDENIHRALKKPISSAYSMSTLLSFEPYVDSTMRVFCEQLESRFIENKKPLDFGKWLQMFAFDVIGELTFSRRLGFLESGEDINHVMANIWETFKKTSLVTQMPWLDKLWTNNPIQRWRRGGGASPGAAFAMARVEERRELQRTTNKNDWHFNTRDFLSRFMEAEAKDPSIPPYALAAWASSNITAGSDTTGIFLRTIFYQLLTHPETLRKLREELDQAAAAGNLDDLASWKQTRELPYLDAVIKEGGRIHPPFGLPYERVVPAQGATICGKFLPGGTLVGMSAWVVHRNKELYGEDCDEWNPDRWLKCDTEKRRKMENALLTFGAGHRTCMGKHIAYLEMYKVVPTLLRKYDVSRLLCFLVSRTG</sequence>
<accession>Q0CRQ3</accession>
<protein>
    <recommendedName>
        <fullName evidence="6">Cytochrome P450 monooxygenase ATEG_03631</fullName>
        <ecNumber evidence="5">1.-.-.-</ecNumber>
    </recommendedName>
    <alternativeName>
        <fullName evidence="6">Azasperpyranone A biosynthesis cluster A protein ATEG_03631</fullName>
    </alternativeName>
</protein>
<proteinExistence type="evidence at protein level"/>